<keyword id="KW-0238">DNA-binding</keyword>
<keyword id="KW-1017">Isopeptide bond</keyword>
<keyword id="KW-0479">Metal-binding</keyword>
<keyword id="KW-0539">Nucleus</keyword>
<keyword id="KW-1267">Proteomics identification</keyword>
<keyword id="KW-1185">Reference proteome</keyword>
<keyword id="KW-0677">Repeat</keyword>
<keyword id="KW-0832">Ubl conjugation</keyword>
<keyword id="KW-0862">Zinc</keyword>
<keyword id="KW-0863">Zinc-finger</keyword>
<reference key="1">
    <citation type="journal article" date="1994" name="J. Mol. Biol.">
        <title>The OZF gene encodes a protein consisting essentially of zinc finger motifs.</title>
        <authorList>
            <person name="le Chalony C."/>
            <person name="Prosperi M.-T."/>
            <person name="Haluza R."/>
            <person name="Apiou F."/>
            <person name="Dutrillaux B."/>
            <person name="Goubin G."/>
        </authorList>
    </citation>
    <scope>NUCLEOTIDE SEQUENCE [MRNA]</scope>
    <scope>TISSUE SPECIFICITY</scope>
    <scope>VARIANT LYS-8</scope>
    <source>
        <tissue>Mammary gland</tissue>
    </source>
</reference>
<reference key="2">
    <citation type="journal article" date="2001" name="Cytogenet. Cell Genet.">
        <title>Genomic organization and promoter identification of ZNF146, a gene encoding a protein consisting solely of zinc finger domains.</title>
        <authorList>
            <person name="Pibouin L."/>
            <person name="Villaudy J."/>
            <person name="Prosperi M.-T."/>
            <person name="Goubin G."/>
        </authorList>
    </citation>
    <scope>NUCLEOTIDE SEQUENCE [GENOMIC DNA]</scope>
    <scope>VARIANT LYS-8</scope>
</reference>
<reference key="3">
    <citation type="journal article" date="2004" name="Nature">
        <title>The DNA sequence and biology of human chromosome 19.</title>
        <authorList>
            <person name="Grimwood J."/>
            <person name="Gordon L.A."/>
            <person name="Olsen A.S."/>
            <person name="Terry A."/>
            <person name="Schmutz J."/>
            <person name="Lamerdin J.E."/>
            <person name="Hellsten U."/>
            <person name="Goodstein D."/>
            <person name="Couronne O."/>
            <person name="Tran-Gyamfi M."/>
            <person name="Aerts A."/>
            <person name="Altherr M."/>
            <person name="Ashworth L."/>
            <person name="Bajorek E."/>
            <person name="Black S."/>
            <person name="Branscomb E."/>
            <person name="Caenepeel S."/>
            <person name="Carrano A.V."/>
            <person name="Caoile C."/>
            <person name="Chan Y.M."/>
            <person name="Christensen M."/>
            <person name="Cleland C.A."/>
            <person name="Copeland A."/>
            <person name="Dalin E."/>
            <person name="Dehal P."/>
            <person name="Denys M."/>
            <person name="Detter J.C."/>
            <person name="Escobar J."/>
            <person name="Flowers D."/>
            <person name="Fotopulos D."/>
            <person name="Garcia C."/>
            <person name="Georgescu A.M."/>
            <person name="Glavina T."/>
            <person name="Gomez M."/>
            <person name="Gonzales E."/>
            <person name="Groza M."/>
            <person name="Hammon N."/>
            <person name="Hawkins T."/>
            <person name="Haydu L."/>
            <person name="Ho I."/>
            <person name="Huang W."/>
            <person name="Israni S."/>
            <person name="Jett J."/>
            <person name="Kadner K."/>
            <person name="Kimball H."/>
            <person name="Kobayashi A."/>
            <person name="Larionov V."/>
            <person name="Leem S.-H."/>
            <person name="Lopez F."/>
            <person name="Lou Y."/>
            <person name="Lowry S."/>
            <person name="Malfatti S."/>
            <person name="Martinez D."/>
            <person name="McCready P.M."/>
            <person name="Medina C."/>
            <person name="Morgan J."/>
            <person name="Nelson K."/>
            <person name="Nolan M."/>
            <person name="Ovcharenko I."/>
            <person name="Pitluck S."/>
            <person name="Pollard M."/>
            <person name="Popkie A.P."/>
            <person name="Predki P."/>
            <person name="Quan G."/>
            <person name="Ramirez L."/>
            <person name="Rash S."/>
            <person name="Retterer J."/>
            <person name="Rodriguez A."/>
            <person name="Rogers S."/>
            <person name="Salamov A."/>
            <person name="Salazar A."/>
            <person name="She X."/>
            <person name="Smith D."/>
            <person name="Slezak T."/>
            <person name="Solovyev V."/>
            <person name="Thayer N."/>
            <person name="Tice H."/>
            <person name="Tsai M."/>
            <person name="Ustaszewska A."/>
            <person name="Vo N."/>
            <person name="Wagner M."/>
            <person name="Wheeler J."/>
            <person name="Wu K."/>
            <person name="Xie G."/>
            <person name="Yang J."/>
            <person name="Dubchak I."/>
            <person name="Furey T.S."/>
            <person name="DeJong P."/>
            <person name="Dickson M."/>
            <person name="Gordon D."/>
            <person name="Eichler E.E."/>
            <person name="Pennacchio L.A."/>
            <person name="Richardson P."/>
            <person name="Stubbs L."/>
            <person name="Rokhsar D.S."/>
            <person name="Myers R.M."/>
            <person name="Rubin E.M."/>
            <person name="Lucas S.M."/>
        </authorList>
    </citation>
    <scope>NUCLEOTIDE SEQUENCE [LARGE SCALE GENOMIC DNA]</scope>
</reference>
<reference key="4">
    <citation type="journal article" date="2004" name="Genome Res.">
        <title>The status, quality, and expansion of the NIH full-length cDNA project: the Mammalian Gene Collection (MGC).</title>
        <authorList>
            <consortium name="The MGC Project Team"/>
        </authorList>
    </citation>
    <scope>NUCLEOTIDE SEQUENCE [LARGE SCALE MRNA]</scope>
    <scope>VARIANT LYS-8</scope>
</reference>
<reference key="5">
    <citation type="journal article" date="1996" name="Eur. J. Biochem.">
        <title>Identification, nuclear localization, and binding activities of OZF, a human protein solely composed of zinc-finger motifs.</title>
        <authorList>
            <person name="Ferbus D."/>
            <person name="le Chalony C."/>
            <person name="Prosperi M.-T."/>
            <person name="Muleris M."/>
            <person name="Vincent-Salomon A."/>
            <person name="Goubin G."/>
        </authorList>
    </citation>
    <scope>DNA-BINDING</scope>
    <scope>SUBCELLULAR LOCATION</scope>
    <scope>TISSUE SPECIFICITY</scope>
</reference>
<reference key="6">
    <citation type="journal article" date="1999" name="Int. J. Cancer">
        <title>Amplification and over-expression of OZF, a gene encoding a zinc finger protein, in human pancreatic carcinomas.</title>
        <authorList>
            <person name="Ferbus D."/>
            <person name="Flechon A."/>
            <person name="Muleris M."/>
            <person name="Li Y."/>
            <person name="Hanash S."/>
            <person name="Terris B."/>
            <person name="Hammel P."/>
            <person name="Pibouin L."/>
            <person name="Dutrillaux B."/>
            <person name="Goubin G."/>
        </authorList>
    </citation>
    <scope>OVEREXPRESSION IN PANCREATIC CANCER</scope>
</reference>
<reference key="7">
    <citation type="journal article" date="2003" name="J. Pathol.">
        <title>The zinc finger protein OZF (ZNF146) is overexpressed in colorectal cancer.</title>
        <authorList>
            <person name="Ferbus D."/>
            <person name="Bovin C."/>
            <person name="Validire P."/>
            <person name="Goubin G."/>
        </authorList>
    </citation>
    <scope>OVEREXPRESSION IN COLORECTAL CANCER</scope>
</reference>
<reference key="8">
    <citation type="journal article" date="2005" name="J. Cell. Biochem.">
        <title>Zinc finger protein overexpressed in colon carcinoma interacts with the telomeric protein hRap1.</title>
        <authorList>
            <person name="Antoine K."/>
            <person name="Ferbus D."/>
            <person name="Kolahgar G."/>
            <person name="Prosperi M.-T."/>
            <person name="Goubin G."/>
        </authorList>
    </citation>
    <scope>INTERACTION WITH TERF2IP</scope>
</reference>
<reference key="9">
    <citation type="journal article" date="2005" name="Mol. Cell. Biochem.">
        <title>A Kruppel zinc finger of ZNF 146 interacts with the SUMO-1 conjugating enzyme UBC9 and is sumoylated in vivo.</title>
        <authorList>
            <person name="Antoine K."/>
            <person name="Prosperi M.-T."/>
            <person name="Ferbus D."/>
            <person name="Boule C."/>
            <person name="Goubin G."/>
        </authorList>
    </citation>
    <scope>INTERACTION WITH UBE2I</scope>
    <scope>SUMOYLATION AT LYS-157 AND LYS-169</scope>
    <scope>MUTAGENESIS OF LYS-157 AND LYS-169</scope>
</reference>
<reference key="10">
    <citation type="journal article" date="2017" name="Nat. Struct. Mol. Biol.">
        <title>Site-specific mapping of the human SUMO proteome reveals co-modification with phosphorylation.</title>
        <authorList>
            <person name="Hendriks I.A."/>
            <person name="Lyon D."/>
            <person name="Young C."/>
            <person name="Jensen L.J."/>
            <person name="Vertegaal A.C."/>
            <person name="Nielsen M.L."/>
        </authorList>
    </citation>
    <scope>SUMOYLATION [LARGE SCALE ANALYSIS] AT LYS-28; LYS-51; LYS-56 AND LYS-173</scope>
    <scope>IDENTIFICATION BY MASS SPECTROMETRY [LARGE SCALE ANALYSIS]</scope>
</reference>
<dbReference type="EMBL" id="X70394">
    <property type="protein sequence ID" value="CAA49844.1"/>
    <property type="molecule type" value="mRNA"/>
</dbReference>
<dbReference type="EMBL" id="AJ011806">
    <property type="protein sequence ID" value="CAB41967.1"/>
    <property type="molecule type" value="Genomic_DNA"/>
</dbReference>
<dbReference type="EMBL" id="AC012617">
    <property type="status" value="NOT_ANNOTATED_CDS"/>
    <property type="molecule type" value="Genomic_DNA"/>
</dbReference>
<dbReference type="EMBL" id="BC110500">
    <property type="protein sequence ID" value="AAI10501.1"/>
    <property type="molecule type" value="mRNA"/>
</dbReference>
<dbReference type="EMBL" id="BC110501">
    <property type="protein sequence ID" value="AAI10502.1"/>
    <property type="molecule type" value="mRNA"/>
</dbReference>
<dbReference type="CCDS" id="CCDS12492.1"/>
<dbReference type="PIR" id="S43826">
    <property type="entry name" value="S43826"/>
</dbReference>
<dbReference type="RefSeq" id="NP_001093108.1">
    <property type="nucleotide sequence ID" value="NM_001099638.2"/>
</dbReference>
<dbReference type="RefSeq" id="NP_001093109.1">
    <property type="nucleotide sequence ID" value="NM_001099639.2"/>
</dbReference>
<dbReference type="RefSeq" id="NP_009076.2">
    <property type="nucleotide sequence ID" value="NM_007145.3"/>
</dbReference>
<dbReference type="RefSeq" id="XP_005259271.1">
    <property type="nucleotide sequence ID" value="XM_005259214.4"/>
</dbReference>
<dbReference type="RefSeq" id="XP_016882733.1">
    <property type="nucleotide sequence ID" value="XM_017027244.1"/>
</dbReference>
<dbReference type="RefSeq" id="XP_016882734.1">
    <property type="nucleotide sequence ID" value="XM_017027245.1"/>
</dbReference>
<dbReference type="RefSeq" id="XP_016882735.1">
    <property type="nucleotide sequence ID" value="XM_017027246.3"/>
</dbReference>
<dbReference type="RefSeq" id="XP_016882736.1">
    <property type="nucleotide sequence ID" value="XM_017027247.3"/>
</dbReference>
<dbReference type="RefSeq" id="XP_047295321.1">
    <property type="nucleotide sequence ID" value="XM_047439365.1"/>
</dbReference>
<dbReference type="RefSeq" id="XP_047295322.1">
    <property type="nucleotide sequence ID" value="XM_047439366.1"/>
</dbReference>
<dbReference type="RefSeq" id="XP_047295323.1">
    <property type="nucleotide sequence ID" value="XM_047439367.1"/>
</dbReference>
<dbReference type="RefSeq" id="XP_047295324.1">
    <property type="nucleotide sequence ID" value="XM_047439368.1"/>
</dbReference>
<dbReference type="RefSeq" id="XP_054177985.1">
    <property type="nucleotide sequence ID" value="XM_054322010.1"/>
</dbReference>
<dbReference type="RefSeq" id="XP_054177986.1">
    <property type="nucleotide sequence ID" value="XM_054322011.1"/>
</dbReference>
<dbReference type="RefSeq" id="XP_054177987.1">
    <property type="nucleotide sequence ID" value="XM_054322012.1"/>
</dbReference>
<dbReference type="RefSeq" id="XP_054177988.1">
    <property type="nucleotide sequence ID" value="XM_054322013.1"/>
</dbReference>
<dbReference type="RefSeq" id="XP_054177989.1">
    <property type="nucleotide sequence ID" value="XM_054322014.1"/>
</dbReference>
<dbReference type="RefSeq" id="XP_054177990.1">
    <property type="nucleotide sequence ID" value="XM_054322015.1"/>
</dbReference>
<dbReference type="RefSeq" id="XP_054177991.1">
    <property type="nucleotide sequence ID" value="XM_054322016.1"/>
</dbReference>
<dbReference type="SMR" id="Q15072"/>
<dbReference type="BioGRID" id="113499">
    <property type="interactions" value="96"/>
</dbReference>
<dbReference type="FunCoup" id="Q15072">
    <property type="interactions" value="1787"/>
</dbReference>
<dbReference type="IntAct" id="Q15072">
    <property type="interactions" value="55"/>
</dbReference>
<dbReference type="MINT" id="Q15072"/>
<dbReference type="STRING" id="9606.ENSP00000400391"/>
<dbReference type="iPTMnet" id="Q15072"/>
<dbReference type="PhosphoSitePlus" id="Q15072"/>
<dbReference type="BioMuta" id="ZNF146"/>
<dbReference type="DMDM" id="134048495"/>
<dbReference type="jPOST" id="Q15072"/>
<dbReference type="MassIVE" id="Q15072"/>
<dbReference type="PaxDb" id="9606-ENSP00000400391"/>
<dbReference type="PeptideAtlas" id="Q15072"/>
<dbReference type="ProteomicsDB" id="60426"/>
<dbReference type="Pumba" id="Q15072"/>
<dbReference type="Antibodypedia" id="929">
    <property type="antibodies" value="157 antibodies from 25 providers"/>
</dbReference>
<dbReference type="DNASU" id="7705"/>
<dbReference type="Ensembl" id="ENST00000443387.3">
    <property type="protein sequence ID" value="ENSP00000392095.1"/>
    <property type="gene ID" value="ENSG00000167635.12"/>
</dbReference>
<dbReference type="Ensembl" id="ENST00000456324.5">
    <property type="protein sequence ID" value="ENSP00000400391.1"/>
    <property type="gene ID" value="ENSG00000167635.12"/>
</dbReference>
<dbReference type="GeneID" id="7705"/>
<dbReference type="KEGG" id="hsa:7705"/>
<dbReference type="MANE-Select" id="ENST00000443387.3">
    <property type="protein sequence ID" value="ENSP00000392095.1"/>
    <property type="RefSeq nucleotide sequence ID" value="NM_007145.3"/>
    <property type="RefSeq protein sequence ID" value="NP_009076.2"/>
</dbReference>
<dbReference type="UCSC" id="uc002odq.5">
    <property type="organism name" value="human"/>
</dbReference>
<dbReference type="AGR" id="HGNC:12931"/>
<dbReference type="CTD" id="7705"/>
<dbReference type="DisGeNET" id="7705"/>
<dbReference type="GeneCards" id="ZNF146"/>
<dbReference type="HGNC" id="HGNC:12931">
    <property type="gene designation" value="ZNF146"/>
</dbReference>
<dbReference type="HPA" id="ENSG00000167635">
    <property type="expression patterns" value="Low tissue specificity"/>
</dbReference>
<dbReference type="MIM" id="601505">
    <property type="type" value="gene"/>
</dbReference>
<dbReference type="neXtProt" id="NX_Q15072"/>
<dbReference type="OpenTargets" id="ENSG00000167635"/>
<dbReference type="PharmGKB" id="PA37518"/>
<dbReference type="VEuPathDB" id="HostDB:ENSG00000167635"/>
<dbReference type="eggNOG" id="KOG1721">
    <property type="taxonomic scope" value="Eukaryota"/>
</dbReference>
<dbReference type="GeneTree" id="ENSGT00940000162671"/>
<dbReference type="HOGENOM" id="CLU_002678_2_1_1"/>
<dbReference type="InParanoid" id="Q15072"/>
<dbReference type="OMA" id="LTEHENF"/>
<dbReference type="OrthoDB" id="427030at2759"/>
<dbReference type="PAN-GO" id="Q15072">
    <property type="GO annotations" value="4 GO annotations based on evolutionary models"/>
</dbReference>
<dbReference type="PhylomeDB" id="Q15072"/>
<dbReference type="TreeFam" id="TF337055"/>
<dbReference type="PathwayCommons" id="Q15072"/>
<dbReference type="SignaLink" id="Q15072"/>
<dbReference type="BioGRID-ORCS" id="7705">
    <property type="hits" value="12 hits in 1151 CRISPR screens"/>
</dbReference>
<dbReference type="ChiTaRS" id="ZNF146">
    <property type="organism name" value="human"/>
</dbReference>
<dbReference type="GeneWiki" id="ZNF146"/>
<dbReference type="GenomeRNAi" id="7705"/>
<dbReference type="Pharos" id="Q15072">
    <property type="development level" value="Tbio"/>
</dbReference>
<dbReference type="PRO" id="PR:Q15072"/>
<dbReference type="Proteomes" id="UP000005640">
    <property type="component" value="Chromosome 19"/>
</dbReference>
<dbReference type="RNAct" id="Q15072">
    <property type="molecule type" value="protein"/>
</dbReference>
<dbReference type="Bgee" id="ENSG00000167635">
    <property type="expression patterns" value="Expressed in parietal pleura and 216 other cell types or tissues"/>
</dbReference>
<dbReference type="GO" id="GO:0005829">
    <property type="term" value="C:cytosol"/>
    <property type="evidence" value="ECO:0000314"/>
    <property type="project" value="HPA"/>
</dbReference>
<dbReference type="GO" id="GO:0005730">
    <property type="term" value="C:nucleolus"/>
    <property type="evidence" value="ECO:0000314"/>
    <property type="project" value="HPA"/>
</dbReference>
<dbReference type="GO" id="GO:0005634">
    <property type="term" value="C:nucleus"/>
    <property type="evidence" value="ECO:0000318"/>
    <property type="project" value="GO_Central"/>
</dbReference>
<dbReference type="GO" id="GO:0003677">
    <property type="term" value="F:DNA binding"/>
    <property type="evidence" value="ECO:0000304"/>
    <property type="project" value="ProtInc"/>
</dbReference>
<dbReference type="GO" id="GO:0000981">
    <property type="term" value="F:DNA-binding transcription factor activity, RNA polymerase II-specific"/>
    <property type="evidence" value="ECO:0000318"/>
    <property type="project" value="GO_Central"/>
</dbReference>
<dbReference type="GO" id="GO:0008201">
    <property type="term" value="F:heparin binding"/>
    <property type="evidence" value="ECO:0000304"/>
    <property type="project" value="ProtInc"/>
</dbReference>
<dbReference type="GO" id="GO:0000978">
    <property type="term" value="F:RNA polymerase II cis-regulatory region sequence-specific DNA binding"/>
    <property type="evidence" value="ECO:0000318"/>
    <property type="project" value="GO_Central"/>
</dbReference>
<dbReference type="GO" id="GO:0008270">
    <property type="term" value="F:zinc ion binding"/>
    <property type="evidence" value="ECO:0000304"/>
    <property type="project" value="ProtInc"/>
</dbReference>
<dbReference type="GO" id="GO:0006355">
    <property type="term" value="P:regulation of DNA-templated transcription"/>
    <property type="evidence" value="ECO:0000304"/>
    <property type="project" value="ProtInc"/>
</dbReference>
<dbReference type="GO" id="GO:0006357">
    <property type="term" value="P:regulation of transcription by RNA polymerase II"/>
    <property type="evidence" value="ECO:0000318"/>
    <property type="project" value="GO_Central"/>
</dbReference>
<dbReference type="FunFam" id="3.30.160.60:FF:003729">
    <property type="match status" value="1"/>
</dbReference>
<dbReference type="FunFam" id="3.30.160.60:FF:000794">
    <property type="entry name" value="zinc finger protein 2 isoform X2"/>
    <property type="match status" value="1"/>
</dbReference>
<dbReference type="FunFam" id="3.30.160.60:FF:000919">
    <property type="entry name" value="Zinc finger protein 260"/>
    <property type="match status" value="2"/>
</dbReference>
<dbReference type="FunFam" id="3.30.160.60:FF:001408">
    <property type="entry name" value="Zinc finger protein 260"/>
    <property type="match status" value="1"/>
</dbReference>
<dbReference type="FunFam" id="3.30.160.60:FF:000016">
    <property type="entry name" value="zinc finger protein 37 homolog"/>
    <property type="match status" value="1"/>
</dbReference>
<dbReference type="FunFam" id="3.30.160.60:FF:001498">
    <property type="entry name" value="Zinc finger protein 404"/>
    <property type="match status" value="1"/>
</dbReference>
<dbReference type="FunFam" id="3.30.160.60:FF:002254">
    <property type="entry name" value="Zinc finger protein 540"/>
    <property type="match status" value="1"/>
</dbReference>
<dbReference type="FunFam" id="3.30.160.60:FF:001060">
    <property type="entry name" value="Zinc finger protein OZF"/>
    <property type="match status" value="1"/>
</dbReference>
<dbReference type="FunFam" id="3.30.160.60:FF:001541">
    <property type="entry name" value="zinc finger protein OZF"/>
    <property type="match status" value="1"/>
</dbReference>
<dbReference type="Gene3D" id="3.30.160.60">
    <property type="entry name" value="Classic Zinc Finger"/>
    <property type="match status" value="10"/>
</dbReference>
<dbReference type="InterPro" id="IPR036236">
    <property type="entry name" value="Znf_C2H2_sf"/>
</dbReference>
<dbReference type="InterPro" id="IPR013087">
    <property type="entry name" value="Znf_C2H2_type"/>
</dbReference>
<dbReference type="PANTHER" id="PTHR23226">
    <property type="entry name" value="ZINC FINGER AND SCAN DOMAIN-CONTAINING"/>
    <property type="match status" value="1"/>
</dbReference>
<dbReference type="PANTHER" id="PTHR23226:SF366">
    <property type="entry name" value="ZINC FINGER PROTEIN ZFP2"/>
    <property type="match status" value="1"/>
</dbReference>
<dbReference type="Pfam" id="PF00096">
    <property type="entry name" value="zf-C2H2"/>
    <property type="match status" value="10"/>
</dbReference>
<dbReference type="SMART" id="SM00355">
    <property type="entry name" value="ZnF_C2H2"/>
    <property type="match status" value="10"/>
</dbReference>
<dbReference type="SUPFAM" id="SSF57667">
    <property type="entry name" value="beta-beta-alpha zinc fingers"/>
    <property type="match status" value="6"/>
</dbReference>
<dbReference type="PROSITE" id="PS00028">
    <property type="entry name" value="ZINC_FINGER_C2H2_1"/>
    <property type="match status" value="10"/>
</dbReference>
<dbReference type="PROSITE" id="PS50157">
    <property type="entry name" value="ZINC_FINGER_C2H2_2"/>
    <property type="match status" value="10"/>
</dbReference>
<feature type="chain" id="PRO_0000047276" description="Zinc finger protein OZF">
    <location>
        <begin position="1"/>
        <end position="292"/>
    </location>
</feature>
<feature type="zinc finger region" description="C2H2-type 1" evidence="2">
    <location>
        <begin position="16"/>
        <end position="38"/>
    </location>
</feature>
<feature type="zinc finger region" description="C2H2-type 2" evidence="2">
    <location>
        <begin position="44"/>
        <end position="66"/>
    </location>
</feature>
<feature type="zinc finger region" description="C2H2-type 3" evidence="2">
    <location>
        <begin position="72"/>
        <end position="94"/>
    </location>
</feature>
<feature type="zinc finger region" description="C2H2-type 4" evidence="2">
    <location>
        <begin position="100"/>
        <end position="122"/>
    </location>
</feature>
<feature type="zinc finger region" description="C2H2-type 5" evidence="2">
    <location>
        <begin position="128"/>
        <end position="150"/>
    </location>
</feature>
<feature type="zinc finger region" description="C2H2-type 6" evidence="2">
    <location>
        <begin position="156"/>
        <end position="178"/>
    </location>
</feature>
<feature type="zinc finger region" description="C2H2-type 7" evidence="2">
    <location>
        <begin position="184"/>
        <end position="206"/>
    </location>
</feature>
<feature type="zinc finger region" description="C2H2-type 8" evidence="2">
    <location>
        <begin position="212"/>
        <end position="234"/>
    </location>
</feature>
<feature type="zinc finger region" description="C2H2-type 9" evidence="2">
    <location>
        <begin position="240"/>
        <end position="262"/>
    </location>
</feature>
<feature type="zinc finger region" description="C2H2-type 10" evidence="2">
    <location>
        <begin position="268"/>
        <end position="290"/>
    </location>
</feature>
<feature type="region of interest" description="Interaction with TERF2IP" evidence="5">
    <location>
        <begin position="212"/>
        <end position="292"/>
    </location>
</feature>
<feature type="cross-link" description="Glycyl lysine isopeptide (Lys-Gly) (interchain with G-Cter in SUMO2)" evidence="10">
    <location>
        <position position="28"/>
    </location>
</feature>
<feature type="cross-link" description="Glycyl lysine isopeptide (Lys-Gly) (interchain with G-Cter in SUMO2)" evidence="10">
    <location>
        <position position="51"/>
    </location>
</feature>
<feature type="cross-link" description="Glycyl lysine isopeptide (Lys-Gly) (interchain with G-Cter in SUMO2)" evidence="10">
    <location>
        <position position="56"/>
    </location>
</feature>
<feature type="cross-link" description="Glycyl lysine isopeptide (Lys-Gly) (interchain with G-Cter in SUMO)" evidence="1">
    <location>
        <position position="157"/>
    </location>
</feature>
<feature type="cross-link" description="Glycyl lysine isopeptide (Lys-Gly) (interchain with G-Cter in SUMO)" evidence="1">
    <location>
        <position position="169"/>
    </location>
</feature>
<feature type="cross-link" description="Glycyl lysine isopeptide (Lys-Gly) (interchain with G-Cter in SUMO2)" evidence="10">
    <location>
        <position position="173"/>
    </location>
</feature>
<feature type="sequence variant" id="VAR_023746" description="In dbSNP:rs2070132." evidence="3 4 7">
    <original>R</original>
    <variation>K</variation>
    <location>
        <position position="8"/>
    </location>
</feature>
<feature type="mutagenesis site" description="Induces a decrease in sumoylation. Induces a strong decrease but does not abolish sumoylation; when associated with R-169." evidence="6">
    <original>K</original>
    <variation>R</variation>
    <location>
        <position position="157"/>
    </location>
</feature>
<feature type="mutagenesis site" description="Induces a decrease in sumoylation. Induces a strong decrease but does not abolish sumoylation; when associated with R-157." evidence="6">
    <original>K</original>
    <variation>R</variation>
    <location>
        <position position="169"/>
    </location>
</feature>
<gene>
    <name type="primary">ZNF146</name>
    <name type="synonym">OZF</name>
</gene>
<protein>
    <recommendedName>
        <fullName>Zinc finger protein OZF</fullName>
    </recommendedName>
    <alternativeName>
        <fullName>Only zinc finger protein</fullName>
    </alternativeName>
    <alternativeName>
        <fullName>Zinc finger protein 146</fullName>
    </alternativeName>
</protein>
<accession>Q15072</accession>
<accession>Q2TB94</accession>
<evidence type="ECO:0000250" key="1"/>
<evidence type="ECO:0000255" key="2">
    <source>
        <dbReference type="PROSITE-ProRule" id="PRU00042"/>
    </source>
</evidence>
<evidence type="ECO:0000269" key="3">
    <source>
    </source>
</evidence>
<evidence type="ECO:0000269" key="4">
    <source>
    </source>
</evidence>
<evidence type="ECO:0000269" key="5">
    <source>
    </source>
</evidence>
<evidence type="ECO:0000269" key="6">
    <source>
    </source>
</evidence>
<evidence type="ECO:0000269" key="7">
    <source>
    </source>
</evidence>
<evidence type="ECO:0000269" key="8">
    <source>
    </source>
</evidence>
<evidence type="ECO:0000305" key="9"/>
<evidence type="ECO:0007744" key="10">
    <source>
    </source>
</evidence>
<sequence length="292" mass="33308">MSHLSQQRIYSGENPFACKVCGKVFSHKSNLTEHEHFHTREKPFECNECGKAFSQKQYVIKHQNTHTGEKLFECNECGKSFSQKENLLTHQKIHTGEKPFECKDCGKAFIQKSNLIRHQRTHTGEKPFVCKECGKTFSGKSNLTEHEKIHIGEKPFKCSECGTAFGQKKYLIKHQNIHTGEKPYECNECGKAFSQRTSLIVHVRIHSGDKPYECNVCGKAFSQSSSLTVHVRSHTGEKPYGCNECGKAFSQFSTLALHLRIHTGKKPYQCSECGKAFSQKSHHIRHQKIHTH</sequence>
<name>OZF_HUMAN</name>
<comment type="subunit">
    <text evidence="5 6">Binds DNA. Interacts with SUMO conjugating enzyme UBC9/UBE2I. Interacts with the telomeric protein TERF2IP.</text>
</comment>
<comment type="interaction">
    <interactant intactId="EBI-11914212">
        <id>Q15072</id>
    </interactant>
    <interactant intactId="EBI-10292696">
        <id>Q96Q77</id>
        <label>CIB3</label>
    </interactant>
    <organismsDiffer>false</organismsDiffer>
    <experiments>3</experiments>
</comment>
<comment type="subcellular location">
    <subcellularLocation>
        <location evidence="8">Nucleus</location>
    </subcellularLocation>
</comment>
<comment type="tissue specificity">
    <text evidence="7 8">Liver, skeletal and heart muscle, mammary cells. Very low levels in brain, lung, placenta and kidney. Strongly overexpressed in many pancreas and colorectal cancers. Increased gene copy numbers are detected in 3 of 12 tumor cell lines and 2 of 12 primary pancreatic carcinomas. Overexpressed in 80% of colorectal cancers.</text>
</comment>
<comment type="PTM">
    <text evidence="6">Sumoylated.</text>
</comment>
<comment type="similarity">
    <text evidence="9">Belongs to the krueppel C2H2-type zinc-finger protein family.</text>
</comment>
<comment type="online information" name="Atlas of Genetics and Cytogenetics in Oncology and Haematology">
    <link uri="https://atlasgeneticsoncology.org/gene/267/OZF"/>
</comment>
<proteinExistence type="evidence at protein level"/>
<organism>
    <name type="scientific">Homo sapiens</name>
    <name type="common">Human</name>
    <dbReference type="NCBI Taxonomy" id="9606"/>
    <lineage>
        <taxon>Eukaryota</taxon>
        <taxon>Metazoa</taxon>
        <taxon>Chordata</taxon>
        <taxon>Craniata</taxon>
        <taxon>Vertebrata</taxon>
        <taxon>Euteleostomi</taxon>
        <taxon>Mammalia</taxon>
        <taxon>Eutheria</taxon>
        <taxon>Euarchontoglires</taxon>
        <taxon>Primates</taxon>
        <taxon>Haplorrhini</taxon>
        <taxon>Catarrhini</taxon>
        <taxon>Hominidae</taxon>
        <taxon>Homo</taxon>
    </lineage>
</organism>